<sequence length="109" mass="11551">MAFAGILNDADITAALAACKAEGSFDHKAFFTKVGLAAKSPADIKKVFEIIDQDKSDFVEEDELKLFLQNFSAGARALSDAETKVFLKAGDSDGDGKIGVDEFGAMIKA</sequence>
<keyword id="KW-0002">3D-structure</keyword>
<keyword id="KW-0007">Acetylation</keyword>
<keyword id="KW-0020">Allergen</keyword>
<keyword id="KW-0106">Calcium</keyword>
<keyword id="KW-0479">Metal-binding</keyword>
<keyword id="KW-0514">Muscle protein</keyword>
<keyword id="KW-1185">Reference proteome</keyword>
<keyword id="KW-0677">Repeat</keyword>
<proteinExistence type="evidence at protein level"/>
<dbReference type="EMBL" id="AY035585">
    <property type="protein sequence ID" value="AAK63087.1"/>
    <property type="molecule type" value="mRNA"/>
</dbReference>
<dbReference type="RefSeq" id="XP_030196389.1">
    <property type="nucleotide sequence ID" value="XM_030340529.1"/>
</dbReference>
<dbReference type="PDB" id="2MBX">
    <property type="method" value="NMR"/>
    <property type="chains" value="A=1-109"/>
</dbReference>
<dbReference type="PDB" id="9B26">
    <property type="method" value="X-ray"/>
    <property type="resolution" value="1.65 A"/>
    <property type="chains" value="A=2-109"/>
</dbReference>
<dbReference type="PDBsum" id="2MBX"/>
<dbReference type="PDBsum" id="9B26"/>
<dbReference type="BMRB" id="Q90YK9"/>
<dbReference type="SMR" id="Q90YK9"/>
<dbReference type="STRING" id="8049.ENSGMOP00000004296"/>
<dbReference type="Allergome" id="358">
    <property type="allergen name" value="Gad m 1"/>
</dbReference>
<dbReference type="Allergome" id="6106">
    <property type="allergen name" value="Gad m 1.0201"/>
</dbReference>
<dbReference type="Ensembl" id="ENSGMOT00000004399">
    <property type="protein sequence ID" value="ENSGMOP00000004268"/>
    <property type="gene ID" value="ENSGMOG00000004559"/>
</dbReference>
<dbReference type="Ensembl" id="ENSGMOT00000004399.2">
    <property type="protein sequence ID" value="ENSGMOP00000004268.2"/>
    <property type="gene ID" value="ENSGMOG00000004064.2"/>
</dbReference>
<dbReference type="GeneID" id="115531334"/>
<dbReference type="GeneTree" id="ENSGT00940000163144"/>
<dbReference type="OrthoDB" id="26525at2759"/>
<dbReference type="EvolutionaryTrace" id="Q90YK9"/>
<dbReference type="Proteomes" id="UP000694546">
    <property type="component" value="Chromosome 18"/>
</dbReference>
<dbReference type="GO" id="GO:0005737">
    <property type="term" value="C:cytoplasm"/>
    <property type="evidence" value="ECO:0007669"/>
    <property type="project" value="TreeGrafter"/>
</dbReference>
<dbReference type="GO" id="GO:0005509">
    <property type="term" value="F:calcium ion binding"/>
    <property type="evidence" value="ECO:0007669"/>
    <property type="project" value="InterPro"/>
</dbReference>
<dbReference type="CDD" id="cd16255">
    <property type="entry name" value="EFh_parvalbumin_beta"/>
    <property type="match status" value="1"/>
</dbReference>
<dbReference type="FunFam" id="1.10.238.10:FF:000060">
    <property type="entry name" value="Parvalbumin, thymic"/>
    <property type="match status" value="1"/>
</dbReference>
<dbReference type="Gene3D" id="1.10.238.10">
    <property type="entry name" value="EF-hand"/>
    <property type="match status" value="1"/>
</dbReference>
<dbReference type="InterPro" id="IPR011992">
    <property type="entry name" value="EF-hand-dom_pair"/>
</dbReference>
<dbReference type="InterPro" id="IPR018247">
    <property type="entry name" value="EF_Hand_1_Ca_BS"/>
</dbReference>
<dbReference type="InterPro" id="IPR002048">
    <property type="entry name" value="EF_hand_dom"/>
</dbReference>
<dbReference type="InterPro" id="IPR008080">
    <property type="entry name" value="Parvalbumin"/>
</dbReference>
<dbReference type="PANTHER" id="PTHR11653:SF12">
    <property type="entry name" value="PARVALBUMIN"/>
    <property type="match status" value="1"/>
</dbReference>
<dbReference type="PANTHER" id="PTHR11653">
    <property type="entry name" value="PARVALBUMIN ALPHA"/>
    <property type="match status" value="1"/>
</dbReference>
<dbReference type="Pfam" id="PF13499">
    <property type="entry name" value="EF-hand_7"/>
    <property type="match status" value="1"/>
</dbReference>
<dbReference type="PRINTS" id="PR01697">
    <property type="entry name" value="PARVALBUMIN"/>
</dbReference>
<dbReference type="SMART" id="SM00054">
    <property type="entry name" value="EFh"/>
    <property type="match status" value="2"/>
</dbReference>
<dbReference type="SUPFAM" id="SSF47473">
    <property type="entry name" value="EF-hand"/>
    <property type="match status" value="1"/>
</dbReference>
<dbReference type="PROSITE" id="PS00018">
    <property type="entry name" value="EF_HAND_1"/>
    <property type="match status" value="2"/>
</dbReference>
<dbReference type="PROSITE" id="PS50222">
    <property type="entry name" value="EF_HAND_2"/>
    <property type="match status" value="2"/>
</dbReference>
<organism>
    <name type="scientific">Gadus morhua</name>
    <name type="common">Atlantic cod</name>
    <dbReference type="NCBI Taxonomy" id="8049"/>
    <lineage>
        <taxon>Eukaryota</taxon>
        <taxon>Metazoa</taxon>
        <taxon>Chordata</taxon>
        <taxon>Craniata</taxon>
        <taxon>Vertebrata</taxon>
        <taxon>Euteleostomi</taxon>
        <taxon>Actinopterygii</taxon>
        <taxon>Neopterygii</taxon>
        <taxon>Teleostei</taxon>
        <taxon>Neoteleostei</taxon>
        <taxon>Acanthomorphata</taxon>
        <taxon>Zeiogadaria</taxon>
        <taxon>Gadariae</taxon>
        <taxon>Gadiformes</taxon>
        <taxon>Gadoidei</taxon>
        <taxon>Gadidae</taxon>
        <taxon>Gadus</taxon>
    </lineage>
</organism>
<comment type="function">
    <text evidence="2 5">In muscle, parvalbumin is thought to be involved in relaxation after contraction (By similarity). It binds two calcium ions (PubMed:25116395).</text>
</comment>
<comment type="biophysicochemical properties">
    <temperatureDependence>
        <text evidence="6">Thermostable between pH 4.0-9.5. Average melting temperature (Tm) across all pH values is 60 degrees Celsius. Lower melting temperature in acidic pH 4.0-5.0.</text>
    </temperatureDependence>
</comment>
<comment type="subunit">
    <text evidence="5 6">Monomer.</text>
</comment>
<comment type="allergen">
    <text evidence="4 6">Causes an allergic reaction in human (PubMed:12431393, PubMed:39584689). Recombinant protein binds to IgE in all of the 5 cod-allergic patients tested in Bergen, Norway (PubMed:12431393). Recombinant protein binds to IgE in all 9 fish-allergic Polish patients tested (PubMed:39584689). Cross-reacts with Gad c 1.0101 allergen from Baltic cod (PubMed:12431393). Cross-reacts with Cyp c 1.0101 allergen from common carp (PubMed:39584689). Retains 7% of its IgE-binding in the presence of calcium-chelating EDTA (PubMed:39584689).</text>
</comment>
<comment type="similarity">
    <text evidence="10">Belongs to the parvalbumin family.</text>
</comment>
<evidence type="ECO:0000250" key="1"/>
<evidence type="ECO:0000250" key="2">
    <source>
        <dbReference type="UniProtKB" id="P86432"/>
    </source>
</evidence>
<evidence type="ECO:0000255" key="3">
    <source>
        <dbReference type="PROSITE-ProRule" id="PRU00448"/>
    </source>
</evidence>
<evidence type="ECO:0000269" key="4">
    <source>
    </source>
</evidence>
<evidence type="ECO:0000269" key="5">
    <source>
    </source>
</evidence>
<evidence type="ECO:0000269" key="6">
    <source>
    </source>
</evidence>
<evidence type="ECO:0000303" key="7">
    <source>
    </source>
</evidence>
<evidence type="ECO:0000303" key="8">
    <source>
    </source>
</evidence>
<evidence type="ECO:0000303" key="9">
    <source>
    </source>
</evidence>
<evidence type="ECO:0000305" key="10"/>
<evidence type="ECO:0007744" key="11">
    <source>
        <dbReference type="PDB" id="2MBX"/>
    </source>
</evidence>
<evidence type="ECO:0007744" key="12">
    <source>
        <dbReference type="PDB" id="9B26"/>
    </source>
</evidence>
<evidence type="ECO:0007829" key="13">
    <source>
        <dbReference type="PDB" id="2MBX"/>
    </source>
</evidence>
<evidence type="ECO:0007829" key="14">
    <source>
        <dbReference type="PDB" id="9B26"/>
    </source>
</evidence>
<feature type="initiator methionine" description="Removed" evidence="1">
    <location>
        <position position="1"/>
    </location>
</feature>
<feature type="chain" id="PRO_0000073609" description="Parvalbumin beta 2">
    <location>
        <begin position="2"/>
        <end position="109"/>
    </location>
</feature>
<feature type="domain" description="EF-hand 1" evidence="3">
    <location>
        <begin position="39"/>
        <end position="74"/>
    </location>
</feature>
<feature type="domain" description="EF-hand 2" evidence="3">
    <location>
        <begin position="78"/>
        <end position="109"/>
    </location>
</feature>
<feature type="binding site" evidence="3 5 6 11 12">
    <location>
        <position position="52"/>
    </location>
    <ligand>
        <name>Ca(2+)</name>
        <dbReference type="ChEBI" id="CHEBI:29108"/>
        <label>1</label>
    </ligand>
</feature>
<feature type="binding site" evidence="3 5 6 11 12">
    <location>
        <position position="54"/>
    </location>
    <ligand>
        <name>Ca(2+)</name>
        <dbReference type="ChEBI" id="CHEBI:29108"/>
        <label>1</label>
    </ligand>
</feature>
<feature type="binding site" evidence="3 5 6 11 12">
    <location>
        <position position="56"/>
    </location>
    <ligand>
        <name>Ca(2+)</name>
        <dbReference type="ChEBI" id="CHEBI:29108"/>
        <label>1</label>
    </ligand>
</feature>
<feature type="binding site" evidence="5 6 11 12">
    <location>
        <position position="58"/>
    </location>
    <ligand>
        <name>Ca(2+)</name>
        <dbReference type="ChEBI" id="CHEBI:29108"/>
        <label>1</label>
    </ligand>
</feature>
<feature type="binding site" evidence="5 6 11 12">
    <location>
        <position position="60"/>
    </location>
    <ligand>
        <name>Ca(2+)</name>
        <dbReference type="ChEBI" id="CHEBI:29108"/>
        <label>1</label>
    </ligand>
</feature>
<feature type="binding site" evidence="3 5 6 11 12">
    <location>
        <position position="63"/>
    </location>
    <ligand>
        <name>Ca(2+)</name>
        <dbReference type="ChEBI" id="CHEBI:29108"/>
        <label>1</label>
    </ligand>
</feature>
<feature type="binding site" evidence="3 5 6 11 12">
    <location>
        <position position="91"/>
    </location>
    <ligand>
        <name>Ca(2+)</name>
        <dbReference type="ChEBI" id="CHEBI:29108"/>
        <label>2</label>
    </ligand>
</feature>
<feature type="binding site" evidence="3 5 6 11 12">
    <location>
        <position position="93"/>
    </location>
    <ligand>
        <name>Ca(2+)</name>
        <dbReference type="ChEBI" id="CHEBI:29108"/>
        <label>2</label>
    </ligand>
</feature>
<feature type="binding site" evidence="3 5 6 11 12">
    <location>
        <position position="95"/>
    </location>
    <ligand>
        <name>Ca(2+)</name>
        <dbReference type="ChEBI" id="CHEBI:29108"/>
        <label>2</label>
    </ligand>
</feature>
<feature type="binding site" evidence="3 5 6 11 12">
    <location>
        <position position="97"/>
    </location>
    <ligand>
        <name>Ca(2+)</name>
        <dbReference type="ChEBI" id="CHEBI:29108"/>
        <label>2</label>
    </ligand>
</feature>
<feature type="binding site" evidence="3 5 6 11 12">
    <location>
        <position position="102"/>
    </location>
    <ligand>
        <name>Ca(2+)</name>
        <dbReference type="ChEBI" id="CHEBI:29108"/>
        <label>2</label>
    </ligand>
</feature>
<feature type="modified residue" description="N-acetylalanine" evidence="1">
    <location>
        <position position="2"/>
    </location>
</feature>
<feature type="turn" evidence="14">
    <location>
        <begin position="2"/>
        <end position="6"/>
    </location>
</feature>
<feature type="helix" evidence="14">
    <location>
        <begin position="9"/>
        <end position="18"/>
    </location>
</feature>
<feature type="helix" evidence="14">
    <location>
        <begin position="27"/>
        <end position="33"/>
    </location>
</feature>
<feature type="helix" evidence="13">
    <location>
        <begin position="36"/>
        <end position="38"/>
    </location>
</feature>
<feature type="helix" evidence="14">
    <location>
        <begin position="41"/>
        <end position="51"/>
    </location>
</feature>
<feature type="strand" evidence="14">
    <location>
        <begin position="57"/>
        <end position="59"/>
    </location>
</feature>
<feature type="helix" evidence="14">
    <location>
        <begin position="61"/>
        <end position="65"/>
    </location>
</feature>
<feature type="helix" evidence="14">
    <location>
        <begin position="67"/>
        <end position="70"/>
    </location>
</feature>
<feature type="helix" evidence="14">
    <location>
        <begin position="80"/>
        <end position="90"/>
    </location>
</feature>
<feature type="strand" evidence="14">
    <location>
        <begin position="95"/>
        <end position="98"/>
    </location>
</feature>
<feature type="helix" evidence="14">
    <location>
        <begin position="100"/>
        <end position="107"/>
    </location>
</feature>
<protein>
    <recommendedName>
        <fullName evidence="10">Parvalbumin beta 2</fullName>
    </recommendedName>
    <alternativeName>
        <fullName evidence="9">Beta-parvalbumin</fullName>
        <shortName evidence="9">Beta-PV</shortName>
    </alternativeName>
    <alternativeName>
        <fullName evidence="8">Beta-parvalbumin Gad m 1</fullName>
    </alternativeName>
    <allergenName evidence="9">Gad m 1.0201</allergenName>
</protein>
<reference key="1">
    <citation type="journal article" date="2003" name="Mol. Immunol.">
        <title>The major allergen (parvalbumin) of codfish is encoded by at least two isotypic genes: cDNA cloning, expression and antibody binding of the recombinant allergens.</title>
        <authorList>
            <person name="Van Do T."/>
            <person name="Hordvik I."/>
            <person name="Endresen C."/>
            <person name="Elsayed S."/>
        </authorList>
    </citation>
    <scope>NUCLEOTIDE SEQUENCE [MRNA]</scope>
    <scope>ALLERGEN</scope>
    <source>
        <tissue evidence="7">White muscle</tissue>
    </source>
</reference>
<reference evidence="11" key="2">
    <citation type="journal article" date="2014" name="Proteins">
        <title>Solution and high-pressure NMR studies of the structure, dynamics, and stability of the cross-reactive allergenic cod parvalbumin Gad m 1.</title>
        <authorList>
            <person name="Moraes A.H."/>
            <person name="Ackerbauer D."/>
            <person name="Kostadinova M."/>
            <person name="Bublin M."/>
            <person name="de Oliveira G.A."/>
            <person name="Ferreira F."/>
            <person name="Almeida F.C."/>
            <person name="Breiteneder H."/>
            <person name="Valente A.P."/>
        </authorList>
    </citation>
    <scope>STRUCTURE BY NMR IN COMPLEX WITH CA(2+)</scope>
    <scope>SUBUNIT</scope>
</reference>
<reference evidence="12" key="3">
    <citation type="journal article" date="2024" name="Protein Sci.">
        <title>Comparative studies of seafood and reptile alpha- and beta-parvalbumins.</title>
        <authorList>
            <person name="O'Malley A."/>
            <person name="Ray J.M."/>
            <person name="Kitlas P."/>
            <person name="Ruethers T."/>
            <person name="Kapingidza A.B."/>
            <person name="Cierpicki T."/>
            <person name="Lopata A."/>
            <person name="Kowal K."/>
            <person name="Chruszcz M."/>
        </authorList>
    </citation>
    <scope>X-RAY CRYSTALLOGRAPHY (1.65 ANGSTROMS) OF 2-109 IN COMPLEX WITH LA(3+)</scope>
    <scope>BIOPHYSICOCHEMICAL PROPERTIES</scope>
    <scope>SUBUNIT</scope>
    <scope>ALLERGEN</scope>
</reference>
<name>PRVB2_GADMO</name>
<accession>Q90YK9</accession>
<gene>
    <name evidence="10" type="primary">pvalb2</name>
</gene>